<protein>
    <recommendedName>
        <fullName evidence="1">ATP-dependent 6-phosphofructokinase</fullName>
        <shortName evidence="1">ATP-PFK</shortName>
        <shortName evidence="1">Phosphofructokinase</shortName>
        <ecNumber evidence="1">2.7.1.11</ecNumber>
    </recommendedName>
    <alternativeName>
        <fullName evidence="1">Phosphohexokinase</fullName>
    </alternativeName>
</protein>
<gene>
    <name evidence="1" type="primary">pfkA</name>
    <name type="ordered locus">HDEF_1894</name>
</gene>
<organism>
    <name type="scientific">Hamiltonella defensa subsp. Acyrthosiphon pisum (strain 5AT)</name>
    <dbReference type="NCBI Taxonomy" id="572265"/>
    <lineage>
        <taxon>Bacteria</taxon>
        <taxon>Pseudomonadati</taxon>
        <taxon>Pseudomonadota</taxon>
        <taxon>Gammaproteobacteria</taxon>
        <taxon>Enterobacterales</taxon>
        <taxon>Enterobacteriaceae</taxon>
        <taxon>aphid secondary symbionts</taxon>
        <taxon>Candidatus Hamiltonella</taxon>
    </lineage>
</organism>
<keyword id="KW-0021">Allosteric enzyme</keyword>
<keyword id="KW-0067">ATP-binding</keyword>
<keyword id="KW-0963">Cytoplasm</keyword>
<keyword id="KW-0324">Glycolysis</keyword>
<keyword id="KW-0418">Kinase</keyword>
<keyword id="KW-0460">Magnesium</keyword>
<keyword id="KW-0479">Metal-binding</keyword>
<keyword id="KW-0547">Nucleotide-binding</keyword>
<keyword id="KW-0808">Transferase</keyword>
<proteinExistence type="inferred from homology"/>
<name>PFKA_HAMD5</name>
<evidence type="ECO:0000255" key="1">
    <source>
        <dbReference type="HAMAP-Rule" id="MF_00339"/>
    </source>
</evidence>
<sequence length="327" mass="35605">MVKRIGVLTSGGDAPGMNAAIRGVVRSTLFKNKEVFGIYDGYQGLYDNQIQQLNRYSVSDIINRGGTILGSARFPEFTQKENRARAIKNLNSHGIDALVVIGGDGSYAGAELLAKEGGIHCVGLPGTIDNDVAGTDYSIGFFTALQTVVEAIDRLRDTSSSHQRISIVEVMGRHCGDLTLAAAIAGGCEFIVIPEVPFDRKELITEIKAGIAKGKKHAIITITERICDINELSQYIEKETKRETRPTVLGHIQRGGAPVAYDRILASRMGAYAVELLVQTDHKAILSCCVGVQNGKMRHAPISECISIDNKRQKFKEDWLDVANTLF</sequence>
<dbReference type="EC" id="2.7.1.11" evidence="1"/>
<dbReference type="EMBL" id="CP001277">
    <property type="protein sequence ID" value="ACQ68484.1"/>
    <property type="molecule type" value="Genomic_DNA"/>
</dbReference>
<dbReference type="RefSeq" id="WP_015874248.1">
    <property type="nucleotide sequence ID" value="NC_012751.1"/>
</dbReference>
<dbReference type="SMR" id="C4K7E1"/>
<dbReference type="STRING" id="572265.HDEF_1894"/>
<dbReference type="GeneID" id="66261474"/>
<dbReference type="KEGG" id="hde:HDEF_1894"/>
<dbReference type="eggNOG" id="COG0205">
    <property type="taxonomic scope" value="Bacteria"/>
</dbReference>
<dbReference type="HOGENOM" id="CLU_020655_0_1_6"/>
<dbReference type="UniPathway" id="UPA00109">
    <property type="reaction ID" value="UER00182"/>
</dbReference>
<dbReference type="Proteomes" id="UP000002334">
    <property type="component" value="Chromosome"/>
</dbReference>
<dbReference type="GO" id="GO:0005945">
    <property type="term" value="C:6-phosphofructokinase complex"/>
    <property type="evidence" value="ECO:0007669"/>
    <property type="project" value="TreeGrafter"/>
</dbReference>
<dbReference type="GO" id="GO:0003872">
    <property type="term" value="F:6-phosphofructokinase activity"/>
    <property type="evidence" value="ECO:0007669"/>
    <property type="project" value="UniProtKB-UniRule"/>
</dbReference>
<dbReference type="GO" id="GO:0016208">
    <property type="term" value="F:AMP binding"/>
    <property type="evidence" value="ECO:0007669"/>
    <property type="project" value="TreeGrafter"/>
</dbReference>
<dbReference type="GO" id="GO:0005524">
    <property type="term" value="F:ATP binding"/>
    <property type="evidence" value="ECO:0007669"/>
    <property type="project" value="UniProtKB-KW"/>
</dbReference>
<dbReference type="GO" id="GO:0070095">
    <property type="term" value="F:fructose-6-phosphate binding"/>
    <property type="evidence" value="ECO:0007669"/>
    <property type="project" value="TreeGrafter"/>
</dbReference>
<dbReference type="GO" id="GO:0042802">
    <property type="term" value="F:identical protein binding"/>
    <property type="evidence" value="ECO:0007669"/>
    <property type="project" value="TreeGrafter"/>
</dbReference>
<dbReference type="GO" id="GO:0046872">
    <property type="term" value="F:metal ion binding"/>
    <property type="evidence" value="ECO:0007669"/>
    <property type="project" value="UniProtKB-KW"/>
</dbReference>
<dbReference type="GO" id="GO:0048029">
    <property type="term" value="F:monosaccharide binding"/>
    <property type="evidence" value="ECO:0007669"/>
    <property type="project" value="TreeGrafter"/>
</dbReference>
<dbReference type="GO" id="GO:0061621">
    <property type="term" value="P:canonical glycolysis"/>
    <property type="evidence" value="ECO:0007669"/>
    <property type="project" value="TreeGrafter"/>
</dbReference>
<dbReference type="GO" id="GO:0030388">
    <property type="term" value="P:fructose 1,6-bisphosphate metabolic process"/>
    <property type="evidence" value="ECO:0007669"/>
    <property type="project" value="TreeGrafter"/>
</dbReference>
<dbReference type="GO" id="GO:0006002">
    <property type="term" value="P:fructose 6-phosphate metabolic process"/>
    <property type="evidence" value="ECO:0007669"/>
    <property type="project" value="InterPro"/>
</dbReference>
<dbReference type="FunFam" id="3.40.50.450:FF:000001">
    <property type="entry name" value="ATP-dependent 6-phosphofructokinase"/>
    <property type="match status" value="1"/>
</dbReference>
<dbReference type="FunFam" id="3.40.50.460:FF:000002">
    <property type="entry name" value="ATP-dependent 6-phosphofructokinase"/>
    <property type="match status" value="1"/>
</dbReference>
<dbReference type="Gene3D" id="3.40.50.450">
    <property type="match status" value="1"/>
</dbReference>
<dbReference type="Gene3D" id="3.40.50.460">
    <property type="entry name" value="Phosphofructokinase domain"/>
    <property type="match status" value="1"/>
</dbReference>
<dbReference type="HAMAP" id="MF_00339">
    <property type="entry name" value="Phosphofructokinase_I_B1"/>
    <property type="match status" value="1"/>
</dbReference>
<dbReference type="InterPro" id="IPR022953">
    <property type="entry name" value="ATP_PFK"/>
</dbReference>
<dbReference type="InterPro" id="IPR012003">
    <property type="entry name" value="ATP_PFK_prok-type"/>
</dbReference>
<dbReference type="InterPro" id="IPR012828">
    <property type="entry name" value="PFKA_ATP_prok"/>
</dbReference>
<dbReference type="InterPro" id="IPR015912">
    <property type="entry name" value="Phosphofructokinase_CS"/>
</dbReference>
<dbReference type="InterPro" id="IPR000023">
    <property type="entry name" value="Phosphofructokinase_dom"/>
</dbReference>
<dbReference type="InterPro" id="IPR035966">
    <property type="entry name" value="PKF_sf"/>
</dbReference>
<dbReference type="NCBIfam" id="TIGR02482">
    <property type="entry name" value="PFKA_ATP"/>
    <property type="match status" value="1"/>
</dbReference>
<dbReference type="NCBIfam" id="NF002872">
    <property type="entry name" value="PRK03202.1"/>
    <property type="match status" value="1"/>
</dbReference>
<dbReference type="PANTHER" id="PTHR13697:SF4">
    <property type="entry name" value="ATP-DEPENDENT 6-PHOSPHOFRUCTOKINASE"/>
    <property type="match status" value="1"/>
</dbReference>
<dbReference type="PANTHER" id="PTHR13697">
    <property type="entry name" value="PHOSPHOFRUCTOKINASE"/>
    <property type="match status" value="1"/>
</dbReference>
<dbReference type="Pfam" id="PF00365">
    <property type="entry name" value="PFK"/>
    <property type="match status" value="1"/>
</dbReference>
<dbReference type="PIRSF" id="PIRSF000532">
    <property type="entry name" value="ATP_PFK_prok"/>
    <property type="match status" value="1"/>
</dbReference>
<dbReference type="PRINTS" id="PR00476">
    <property type="entry name" value="PHFRCTKINASE"/>
</dbReference>
<dbReference type="SUPFAM" id="SSF53784">
    <property type="entry name" value="Phosphofructokinase"/>
    <property type="match status" value="1"/>
</dbReference>
<dbReference type="PROSITE" id="PS00433">
    <property type="entry name" value="PHOSPHOFRUCTOKINASE"/>
    <property type="match status" value="1"/>
</dbReference>
<comment type="function">
    <text evidence="1">Catalyzes the phosphorylation of D-fructose 6-phosphate to fructose 1,6-bisphosphate by ATP, the first committing step of glycolysis.</text>
</comment>
<comment type="catalytic activity">
    <reaction evidence="1">
        <text>beta-D-fructose 6-phosphate + ATP = beta-D-fructose 1,6-bisphosphate + ADP + H(+)</text>
        <dbReference type="Rhea" id="RHEA:16109"/>
        <dbReference type="ChEBI" id="CHEBI:15378"/>
        <dbReference type="ChEBI" id="CHEBI:30616"/>
        <dbReference type="ChEBI" id="CHEBI:32966"/>
        <dbReference type="ChEBI" id="CHEBI:57634"/>
        <dbReference type="ChEBI" id="CHEBI:456216"/>
        <dbReference type="EC" id="2.7.1.11"/>
    </reaction>
</comment>
<comment type="cofactor">
    <cofactor evidence="1">
        <name>Mg(2+)</name>
        <dbReference type="ChEBI" id="CHEBI:18420"/>
    </cofactor>
</comment>
<comment type="activity regulation">
    <text evidence="1">Allosterically activated by ADP and other diphosphonucleosides, and allosterically inhibited by phosphoenolpyruvate.</text>
</comment>
<comment type="pathway">
    <text evidence="1">Carbohydrate degradation; glycolysis; D-glyceraldehyde 3-phosphate and glycerone phosphate from D-glucose: step 3/4.</text>
</comment>
<comment type="subunit">
    <text evidence="1">Homotetramer.</text>
</comment>
<comment type="subcellular location">
    <subcellularLocation>
        <location evidence="1">Cytoplasm</location>
    </subcellularLocation>
</comment>
<comment type="similarity">
    <text evidence="1">Belongs to the phosphofructokinase type A (PFKA) family. ATP-dependent PFK group I subfamily. Prokaryotic clade 'B1' sub-subfamily.</text>
</comment>
<reference key="1">
    <citation type="journal article" date="2009" name="Proc. Natl. Acad. Sci. U.S.A.">
        <title>Hamiltonella defensa, genome evolution of protective bacterial endosymbiont from pathogenic ancestors.</title>
        <authorList>
            <person name="Degnan P.H."/>
            <person name="Yu Y."/>
            <person name="Sisneros N."/>
            <person name="Wing R.A."/>
            <person name="Moran N.A."/>
        </authorList>
    </citation>
    <scope>NUCLEOTIDE SEQUENCE [LARGE SCALE GENOMIC DNA]</scope>
    <source>
        <strain>5AT</strain>
    </source>
</reference>
<feature type="chain" id="PRO_1000205248" description="ATP-dependent 6-phosphofructokinase">
    <location>
        <begin position="1"/>
        <end position="327"/>
    </location>
</feature>
<feature type="active site" description="Proton acceptor" evidence="1">
    <location>
        <position position="129"/>
    </location>
</feature>
<feature type="binding site" evidence="1">
    <location>
        <position position="12"/>
    </location>
    <ligand>
        <name>ATP</name>
        <dbReference type="ChEBI" id="CHEBI:30616"/>
    </ligand>
</feature>
<feature type="binding site" evidence="1">
    <location>
        <begin position="22"/>
        <end position="26"/>
    </location>
    <ligand>
        <name>ADP</name>
        <dbReference type="ChEBI" id="CHEBI:456216"/>
        <note>allosteric activator; ligand shared between dimeric partners</note>
    </ligand>
</feature>
<feature type="binding site" evidence="1">
    <location>
        <begin position="55"/>
        <end position="60"/>
    </location>
    <ligand>
        <name>ADP</name>
        <dbReference type="ChEBI" id="CHEBI:456216"/>
        <note>allosteric activator; ligand shared between dimeric partners</note>
    </ligand>
</feature>
<feature type="binding site" evidence="1">
    <location>
        <begin position="73"/>
        <end position="74"/>
    </location>
    <ligand>
        <name>ATP</name>
        <dbReference type="ChEBI" id="CHEBI:30616"/>
    </ligand>
</feature>
<feature type="binding site" evidence="1">
    <location>
        <begin position="103"/>
        <end position="106"/>
    </location>
    <ligand>
        <name>ATP</name>
        <dbReference type="ChEBI" id="CHEBI:30616"/>
    </ligand>
</feature>
<feature type="binding site" evidence="1">
    <location>
        <position position="104"/>
    </location>
    <ligand>
        <name>Mg(2+)</name>
        <dbReference type="ChEBI" id="CHEBI:18420"/>
        <note>catalytic</note>
    </ligand>
</feature>
<feature type="binding site" description="in other chain" evidence="1">
    <location>
        <begin position="127"/>
        <end position="129"/>
    </location>
    <ligand>
        <name>substrate</name>
        <note>ligand shared between dimeric partners</note>
    </ligand>
</feature>
<feature type="binding site" description="in other chain" evidence="1">
    <location>
        <position position="156"/>
    </location>
    <ligand>
        <name>ADP</name>
        <dbReference type="ChEBI" id="CHEBI:456216"/>
        <note>allosteric activator; ligand shared between dimeric partners</note>
    </ligand>
</feature>
<feature type="binding site" evidence="1">
    <location>
        <position position="164"/>
    </location>
    <ligand>
        <name>substrate</name>
        <note>ligand shared between dimeric partners</note>
    </ligand>
</feature>
<feature type="binding site" description="in other chain" evidence="1">
    <location>
        <begin position="171"/>
        <end position="173"/>
    </location>
    <ligand>
        <name>substrate</name>
        <note>ligand shared between dimeric partners</note>
    </ligand>
</feature>
<feature type="binding site" description="in other chain" evidence="1">
    <location>
        <begin position="187"/>
        <end position="189"/>
    </location>
    <ligand>
        <name>ADP</name>
        <dbReference type="ChEBI" id="CHEBI:456216"/>
        <note>allosteric activator; ligand shared between dimeric partners</note>
    </ligand>
</feature>
<feature type="binding site" description="in other chain" evidence="1">
    <location>
        <position position="213"/>
    </location>
    <ligand>
        <name>ADP</name>
        <dbReference type="ChEBI" id="CHEBI:456216"/>
        <note>allosteric activator; ligand shared between dimeric partners</note>
    </ligand>
</feature>
<feature type="binding site" description="in other chain" evidence="1">
    <location>
        <begin position="215"/>
        <end position="217"/>
    </location>
    <ligand>
        <name>ADP</name>
        <dbReference type="ChEBI" id="CHEBI:456216"/>
        <note>allosteric activator; ligand shared between dimeric partners</note>
    </ligand>
</feature>
<feature type="binding site" description="in other chain" evidence="1">
    <location>
        <position position="224"/>
    </location>
    <ligand>
        <name>substrate</name>
        <note>ligand shared between dimeric partners</note>
    </ligand>
</feature>
<feature type="binding site" evidence="1">
    <location>
        <position position="245"/>
    </location>
    <ligand>
        <name>substrate</name>
        <note>ligand shared between dimeric partners</note>
    </ligand>
</feature>
<feature type="binding site" description="in other chain" evidence="1">
    <location>
        <begin position="251"/>
        <end position="254"/>
    </location>
    <ligand>
        <name>substrate</name>
        <note>ligand shared between dimeric partners</note>
    </ligand>
</feature>
<accession>C4K7E1</accession>